<proteinExistence type="evidence at transcript level"/>
<gene>
    <name evidence="6" type="primary">lipF</name>
    <name evidence="8" type="ordered locus">MT3591</name>
</gene>
<feature type="chain" id="PRO_0000455445" description="Carboxylesterase/phospholipase LipF">
    <location>
        <begin position="1"/>
        <end position="373"/>
    </location>
</feature>
<feature type="short sequence motif" description="Involved in the stabilization of the negatively charged intermediate by the formation of the oxyanion hole" evidence="2">
    <location>
        <begin position="116"/>
        <end position="118"/>
    </location>
</feature>
<feature type="active site" evidence="1">
    <location>
        <position position="186"/>
    </location>
</feature>
<feature type="active site" evidence="1">
    <location>
        <position position="285"/>
    </location>
</feature>
<feature type="active site" evidence="1">
    <location>
        <position position="315"/>
    </location>
</feature>
<name>LIPF_MYCTO</name>
<accession>Q7D5F9</accession>
<organism>
    <name type="scientific">Mycobacterium tuberculosis (strain CDC 1551 / Oshkosh)</name>
    <dbReference type="NCBI Taxonomy" id="83331"/>
    <lineage>
        <taxon>Bacteria</taxon>
        <taxon>Bacillati</taxon>
        <taxon>Actinomycetota</taxon>
        <taxon>Actinomycetes</taxon>
        <taxon>Mycobacteriales</taxon>
        <taxon>Mycobacteriaceae</taxon>
        <taxon>Mycobacterium</taxon>
        <taxon>Mycobacterium tuberculosis complex</taxon>
    </lineage>
</organism>
<dbReference type="EC" id="3.1.1.1" evidence="1"/>
<dbReference type="EC" id="3.1.4.3" evidence="1"/>
<dbReference type="EMBL" id="AE000516">
    <property type="protein sequence ID" value="AAK47950.1"/>
    <property type="status" value="ALT_INIT"/>
    <property type="molecule type" value="Genomic_DNA"/>
</dbReference>
<dbReference type="SMR" id="Q7D5F9"/>
<dbReference type="ESTHER" id="myctu-Rv3487c">
    <property type="family name" value="Hormone-sensitive_lipase_like"/>
</dbReference>
<dbReference type="KEGG" id="mtc:MT3591"/>
<dbReference type="HOGENOM" id="CLU_012494_13_0_11"/>
<dbReference type="Proteomes" id="UP000001020">
    <property type="component" value="Chromosome"/>
</dbReference>
<dbReference type="GO" id="GO:0004806">
    <property type="term" value="F:triacylglycerol lipase activity"/>
    <property type="evidence" value="ECO:0007669"/>
    <property type="project" value="TreeGrafter"/>
</dbReference>
<dbReference type="FunFam" id="3.40.50.1820:FF:000278">
    <property type="entry name" value="Esterase LipF"/>
    <property type="match status" value="1"/>
</dbReference>
<dbReference type="Gene3D" id="3.40.50.1820">
    <property type="entry name" value="alpha/beta hydrolase"/>
    <property type="match status" value="1"/>
</dbReference>
<dbReference type="InterPro" id="IPR013094">
    <property type="entry name" value="AB_hydrolase_3"/>
</dbReference>
<dbReference type="InterPro" id="IPR029058">
    <property type="entry name" value="AB_hydrolase_fold"/>
</dbReference>
<dbReference type="InterPro" id="IPR050300">
    <property type="entry name" value="GDXG_lipolytic_enzyme"/>
</dbReference>
<dbReference type="InterPro" id="IPR033140">
    <property type="entry name" value="Lipase_GDXG_put_SER_AS"/>
</dbReference>
<dbReference type="PANTHER" id="PTHR48081">
    <property type="entry name" value="AB HYDROLASE SUPERFAMILY PROTEIN C4A8.06C"/>
    <property type="match status" value="1"/>
</dbReference>
<dbReference type="PANTHER" id="PTHR48081:SF30">
    <property type="entry name" value="ACETYL-HYDROLASE LIPR-RELATED"/>
    <property type="match status" value="1"/>
</dbReference>
<dbReference type="Pfam" id="PF07859">
    <property type="entry name" value="Abhydrolase_3"/>
    <property type="match status" value="1"/>
</dbReference>
<dbReference type="SUPFAM" id="SSF53474">
    <property type="entry name" value="alpha/beta-Hydrolases"/>
    <property type="match status" value="1"/>
</dbReference>
<dbReference type="PROSITE" id="PS01174">
    <property type="entry name" value="LIPASE_GDXG_SER"/>
    <property type="match status" value="1"/>
</dbReference>
<evidence type="ECO:0000250" key="1">
    <source>
        <dbReference type="UniProtKB" id="O06350"/>
    </source>
</evidence>
<evidence type="ECO:0000250" key="2">
    <source>
        <dbReference type="UniProtKB" id="Q5NUF3"/>
    </source>
</evidence>
<evidence type="ECO:0000269" key="3">
    <source>
    </source>
</evidence>
<evidence type="ECO:0000269" key="4">
    <source>
    </source>
</evidence>
<evidence type="ECO:0000269" key="5">
    <source>
    </source>
</evidence>
<evidence type="ECO:0000303" key="6">
    <source>
    </source>
</evidence>
<evidence type="ECO:0000305" key="7"/>
<evidence type="ECO:0000312" key="8">
    <source>
        <dbReference type="EMBL" id="AAK47950.1"/>
    </source>
</evidence>
<reference key="1">
    <citation type="journal article" date="2002" name="J. Bacteriol.">
        <title>Whole-genome comparison of Mycobacterium tuberculosis clinical and laboratory strains.</title>
        <authorList>
            <person name="Fleischmann R.D."/>
            <person name="Alland D."/>
            <person name="Eisen J.A."/>
            <person name="Carpenter L."/>
            <person name="White O."/>
            <person name="Peterson J.D."/>
            <person name="DeBoy R.T."/>
            <person name="Dodson R.J."/>
            <person name="Gwinn M.L."/>
            <person name="Haft D.H."/>
            <person name="Hickey E.K."/>
            <person name="Kolonay J.F."/>
            <person name="Nelson W.C."/>
            <person name="Umayam L.A."/>
            <person name="Ermolaeva M.D."/>
            <person name="Salzberg S.L."/>
            <person name="Delcher A."/>
            <person name="Utterback T.R."/>
            <person name="Weidman J.F."/>
            <person name="Khouri H.M."/>
            <person name="Gill J."/>
            <person name="Mikula A."/>
            <person name="Bishai W."/>
            <person name="Jacobs W.R. Jr."/>
            <person name="Venter J.C."/>
            <person name="Fraser C.M."/>
        </authorList>
    </citation>
    <scope>NUCLEOTIDE SEQUENCE [LARGE SCALE GENOMIC DNA]</scope>
    <source>
        <strain>CDC 1551 / Oshkosh</strain>
    </source>
</reference>
<reference key="2">
    <citation type="journal article" date="2003" name="Infect. Immun.">
        <title>Isolation of acid-inducible genes of Mycobacterium tuberculosis with the use of recombinase-based in vivo expression technology.</title>
        <authorList>
            <person name="Saviola B."/>
            <person name="Woolwine S.C."/>
            <person name="Bishai W.R."/>
        </authorList>
    </citation>
    <scope>INDUCTION BY ACID</scope>
    <source>
        <strain>CDC 1551 / Oshkosh</strain>
    </source>
</reference>
<reference key="3">
    <citation type="journal article" date="2007" name="Gene">
        <title>Determination of the minimal acid-inducible promoter region of the lipF gene from Mycobacterium tuberculosis.</title>
        <authorList>
            <person name="Richter L."/>
            <person name="Tai W."/>
            <person name="Felton J."/>
            <person name="Saviola B."/>
        </authorList>
    </citation>
    <scope>INDUCTION BY ACID</scope>
    <scope>IDENTIFICATION OF PROMOTER</scope>
    <source>
        <strain>CDC 1551 / Oshkosh</strain>
    </source>
</reference>
<reference key="4">
    <citation type="journal article" date="2009" name="Microbiol. Res.">
        <title>The lipF promoter of Mycobacterium tuberculosis is upregulated specifically by acidic pH but not by other stress conditions.</title>
        <authorList>
            <person name="Richter L."/>
            <person name="Saviola B."/>
        </authorList>
    </citation>
    <scope>INDUCTION BY ACID</scope>
    <source>
        <strain>CDC 1551 / Oshkosh</strain>
    </source>
</reference>
<sequence>MSSYYARRPLQSSGCSNSDSCWDGAPIEITESGPSVAGRLAALASRMTIKPLMTVGSYLSPLPLPLGFVDFACRVWRPGQGTVRTTINLPNATAQLVRAPGVRAADGAGRVVLYLHGGAFVMCGPNSHSRIVNALSGFAESPVLIVDYRLIPKHSLGMALDDCHDAYQWLRARGYRPEQIVLAGDSAGGYLALALAQRLQCDDEKPAAIVAISPLLQLAKGPKQDHPNIGTDAMFPARAFDALAAWVRAAAAKNMVDGRPEDLYEPLDHIESSLPPTLIHVSGSEVLLHDAQLGAGKLAAAGVCAEVRVWPGQAHLFQLATPLVPEATRSLRQIGQFIRDATADSSLSPVHRSRYVAGSPRAASRGAFGQSPI</sequence>
<comment type="function">
    <text evidence="1">A short-chain esterase and phospholipase.</text>
</comment>
<comment type="catalytic activity">
    <reaction evidence="1">
        <text>a carboxylic ester + H2O = an alcohol + a carboxylate + H(+)</text>
        <dbReference type="Rhea" id="RHEA:21164"/>
        <dbReference type="ChEBI" id="CHEBI:15377"/>
        <dbReference type="ChEBI" id="CHEBI:15378"/>
        <dbReference type="ChEBI" id="CHEBI:29067"/>
        <dbReference type="ChEBI" id="CHEBI:30879"/>
        <dbReference type="ChEBI" id="CHEBI:33308"/>
        <dbReference type="EC" id="3.1.1.1"/>
    </reaction>
</comment>
<comment type="catalytic activity">
    <reaction evidence="1">
        <text>a 1,2-diacyl-sn-glycero-3-phosphocholine + H2O = phosphocholine + a 1,2-diacyl-sn-glycerol + H(+)</text>
        <dbReference type="Rhea" id="RHEA:10604"/>
        <dbReference type="ChEBI" id="CHEBI:15377"/>
        <dbReference type="ChEBI" id="CHEBI:15378"/>
        <dbReference type="ChEBI" id="CHEBI:17815"/>
        <dbReference type="ChEBI" id="CHEBI:57643"/>
        <dbReference type="ChEBI" id="CHEBI:295975"/>
        <dbReference type="EC" id="3.1.4.3"/>
    </reaction>
    <physiologicalReaction direction="left-to-right" evidence="1">
        <dbReference type="Rhea" id="RHEA:10605"/>
    </physiologicalReaction>
</comment>
<comment type="induction">
    <text evidence="3 4 5">Induced by acidic conditions (PubMed:12595455, PubMed:17434691). Induction levels are the same at pH 4.5 and pH 5.0 and decrease as the pH approaches 6.4. No induction is seen at higher pH, nor by oxidative, hypoxic or temperature stress (PubMed:17869077). Induction is maximal after 22 hours exposure to acid. Induction does not depend on sigF, and does not seem to occur in activated murine macrophages (PubMed:12595455).</text>
</comment>
<comment type="miscellaneous">
    <text evidence="4">The acid-inducible promoter is found 515 bases upstream of the predicted start site. Three start sites have been proposed for this protein, Met-1, Met-47 and Val-97, this is the longest translation, there is protein sequence (for strain H37Rv) that suggests Met-1 is the correct start.</text>
</comment>
<comment type="similarity">
    <text evidence="7">Belongs to the 'GDXG' lipolytic enzyme family.</text>
</comment>
<comment type="sequence caution" evidence="1">
    <conflict type="erroneous initiation">
        <sequence resource="EMBL-CDS" id="AAK47950"/>
    </conflict>
    <text>Truncated N-terminus.</text>
</comment>
<protein>
    <recommendedName>
        <fullName evidence="1 6">Carboxylesterase/phospholipase LipF</fullName>
        <ecNumber evidence="1">3.1.1.1</ecNumber>
        <ecNumber evidence="1">3.1.4.3</ecNumber>
    </recommendedName>
</protein>
<keyword id="KW-0378">Hydrolase</keyword>
<keyword id="KW-1185">Reference proteome</keyword>
<keyword id="KW-0719">Serine esterase</keyword>